<reference key="1">
    <citation type="journal article" date="2005" name="Genome Res.">
        <title>Living with two extremes: conclusions from the genome sequence of Natronomonas pharaonis.</title>
        <authorList>
            <person name="Falb M."/>
            <person name="Pfeiffer F."/>
            <person name="Palm P."/>
            <person name="Rodewald K."/>
            <person name="Hickmann V."/>
            <person name="Tittor J."/>
            <person name="Oesterhelt D."/>
        </authorList>
    </citation>
    <scope>NUCLEOTIDE SEQUENCE [LARGE SCALE GENOMIC DNA]</scope>
    <source>
        <strain>ATCC 35678 / DSM 2160 / CIP 103997 / JCM 8858 / NBRC 14720 / NCIMB 2260 / Gabara</strain>
    </source>
</reference>
<sequence length="206" mass="21951">MGHRDVATVGLGGPVGSGKTAMVKRLVPRLDAAGYNVGVIANDIMTQEDADRLRESFEGILPPDLVEGVETGACPHTGIREDPSMNIAAIDEFTESYPDLDVVLLESGGDNLAATFNPELADYFIFVISVAEGDDIPRKRGPGVTQADLLVVNKTDLAPHVDADLEVMRRDAETVRGDAPTCFTDCKAEEGIDGVVDHIEEGVLFA</sequence>
<feature type="chain" id="PRO_0000347462" description="Urease accessory protein UreG">
    <location>
        <begin position="1"/>
        <end position="206"/>
    </location>
</feature>
<feature type="binding site" evidence="1">
    <location>
        <begin position="13"/>
        <end position="20"/>
    </location>
    <ligand>
        <name>GTP</name>
        <dbReference type="ChEBI" id="CHEBI:37565"/>
    </ligand>
</feature>
<accession>Q3IRZ3</accession>
<name>UREG_NATPD</name>
<protein>
    <recommendedName>
        <fullName evidence="1">Urease accessory protein UreG</fullName>
    </recommendedName>
</protein>
<comment type="function">
    <text evidence="1">Facilitates the functional incorporation of the urease nickel metallocenter. This process requires GTP hydrolysis, probably effectuated by UreG.</text>
</comment>
<comment type="subunit">
    <text evidence="1">Homodimer. UreD, UreF and UreG form a complex that acts as a GTP-hydrolysis-dependent molecular chaperone, activating the urease apoprotein by helping to assemble the nickel containing metallocenter of UreC. The UreE protein probably delivers the nickel.</text>
</comment>
<comment type="subcellular location">
    <subcellularLocation>
        <location evidence="1">Cytoplasm</location>
    </subcellularLocation>
</comment>
<comment type="similarity">
    <text evidence="1">Belongs to the SIMIBI class G3E GTPase family. UreG subfamily.</text>
</comment>
<gene>
    <name evidence="1" type="primary">ureG</name>
    <name type="ordered locus">NP_2014A</name>
</gene>
<keyword id="KW-0143">Chaperone</keyword>
<keyword id="KW-0963">Cytoplasm</keyword>
<keyword id="KW-0342">GTP-binding</keyword>
<keyword id="KW-0996">Nickel insertion</keyword>
<keyword id="KW-0547">Nucleotide-binding</keyword>
<keyword id="KW-1185">Reference proteome</keyword>
<evidence type="ECO:0000255" key="1">
    <source>
        <dbReference type="HAMAP-Rule" id="MF_01389"/>
    </source>
</evidence>
<dbReference type="EMBL" id="CR936257">
    <property type="protein sequence ID" value="CAI49098.1"/>
    <property type="molecule type" value="Genomic_DNA"/>
</dbReference>
<dbReference type="RefSeq" id="WP_011322727.1">
    <property type="nucleotide sequence ID" value="NC_007426.1"/>
</dbReference>
<dbReference type="SMR" id="Q3IRZ3"/>
<dbReference type="STRING" id="348780.NP_2014A"/>
<dbReference type="EnsemblBacteria" id="CAI49098">
    <property type="protein sequence ID" value="CAI49098"/>
    <property type="gene ID" value="NP_2014A"/>
</dbReference>
<dbReference type="GeneID" id="3703454"/>
<dbReference type="KEGG" id="nph:NP_2014A"/>
<dbReference type="eggNOG" id="arCOG01231">
    <property type="taxonomic scope" value="Archaea"/>
</dbReference>
<dbReference type="HOGENOM" id="CLU_072144_1_0_2"/>
<dbReference type="OrthoDB" id="812at2157"/>
<dbReference type="Proteomes" id="UP000002698">
    <property type="component" value="Chromosome"/>
</dbReference>
<dbReference type="GO" id="GO:0005737">
    <property type="term" value="C:cytoplasm"/>
    <property type="evidence" value="ECO:0007669"/>
    <property type="project" value="UniProtKB-SubCell"/>
</dbReference>
<dbReference type="GO" id="GO:0005525">
    <property type="term" value="F:GTP binding"/>
    <property type="evidence" value="ECO:0007669"/>
    <property type="project" value="UniProtKB-KW"/>
</dbReference>
<dbReference type="GO" id="GO:0003924">
    <property type="term" value="F:GTPase activity"/>
    <property type="evidence" value="ECO:0007669"/>
    <property type="project" value="InterPro"/>
</dbReference>
<dbReference type="GO" id="GO:0016151">
    <property type="term" value="F:nickel cation binding"/>
    <property type="evidence" value="ECO:0007669"/>
    <property type="project" value="UniProtKB-UniRule"/>
</dbReference>
<dbReference type="GO" id="GO:0043419">
    <property type="term" value="P:urea catabolic process"/>
    <property type="evidence" value="ECO:0007669"/>
    <property type="project" value="InterPro"/>
</dbReference>
<dbReference type="Gene3D" id="3.40.50.300">
    <property type="entry name" value="P-loop containing nucleotide triphosphate hydrolases"/>
    <property type="match status" value="1"/>
</dbReference>
<dbReference type="HAMAP" id="MF_01389">
    <property type="entry name" value="UreG"/>
    <property type="match status" value="1"/>
</dbReference>
<dbReference type="InterPro" id="IPR003495">
    <property type="entry name" value="CobW/HypB/UreG_nucleotide-bd"/>
</dbReference>
<dbReference type="InterPro" id="IPR027417">
    <property type="entry name" value="P-loop_NTPase"/>
</dbReference>
<dbReference type="InterPro" id="IPR004400">
    <property type="entry name" value="UreG"/>
</dbReference>
<dbReference type="NCBIfam" id="TIGR00101">
    <property type="entry name" value="ureG"/>
    <property type="match status" value="1"/>
</dbReference>
<dbReference type="PANTHER" id="PTHR31715">
    <property type="entry name" value="UREASE ACCESSORY PROTEIN G"/>
    <property type="match status" value="1"/>
</dbReference>
<dbReference type="PANTHER" id="PTHR31715:SF0">
    <property type="entry name" value="UREASE ACCESSORY PROTEIN G"/>
    <property type="match status" value="1"/>
</dbReference>
<dbReference type="Pfam" id="PF02492">
    <property type="entry name" value="cobW"/>
    <property type="match status" value="1"/>
</dbReference>
<dbReference type="PIRSF" id="PIRSF005624">
    <property type="entry name" value="Ni-bind_GTPase"/>
    <property type="match status" value="1"/>
</dbReference>
<dbReference type="SUPFAM" id="SSF52540">
    <property type="entry name" value="P-loop containing nucleoside triphosphate hydrolases"/>
    <property type="match status" value="1"/>
</dbReference>
<proteinExistence type="inferred from homology"/>
<organism>
    <name type="scientific">Natronomonas pharaonis (strain ATCC 35678 / DSM 2160 / CIP 103997 / JCM 8858 / NBRC 14720 / NCIMB 2260 / Gabara)</name>
    <name type="common">Halobacterium pharaonis</name>
    <dbReference type="NCBI Taxonomy" id="348780"/>
    <lineage>
        <taxon>Archaea</taxon>
        <taxon>Methanobacteriati</taxon>
        <taxon>Methanobacteriota</taxon>
        <taxon>Stenosarchaea group</taxon>
        <taxon>Halobacteria</taxon>
        <taxon>Halobacteriales</taxon>
        <taxon>Haloarculaceae</taxon>
        <taxon>Natronomonas</taxon>
    </lineage>
</organism>